<comment type="function">
    <text evidence="1">Involved in the biosynthesis of branched-chain amino acids (BCAA). Catalyzes an alkyl-migration followed by a ketol-acid reduction of (S)-2-acetolactate (S2AL) to yield (R)-2,3-dihydroxy-isovalerate. In the isomerase reaction, S2AL is rearranged via a Mg-dependent methyl migration to produce 3-hydroxy-3-methyl-2-ketobutyrate (HMKB). In the reductase reaction, this 2-ketoacid undergoes a metal-dependent reduction by NADPH to yield (R)-2,3-dihydroxy-isovalerate.</text>
</comment>
<comment type="catalytic activity">
    <reaction evidence="1">
        <text>(2R)-2,3-dihydroxy-3-methylbutanoate + NADP(+) = (2S)-2-acetolactate + NADPH + H(+)</text>
        <dbReference type="Rhea" id="RHEA:22068"/>
        <dbReference type="ChEBI" id="CHEBI:15378"/>
        <dbReference type="ChEBI" id="CHEBI:49072"/>
        <dbReference type="ChEBI" id="CHEBI:57783"/>
        <dbReference type="ChEBI" id="CHEBI:58349"/>
        <dbReference type="ChEBI" id="CHEBI:58476"/>
        <dbReference type="EC" id="1.1.1.86"/>
    </reaction>
</comment>
<comment type="catalytic activity">
    <reaction evidence="1">
        <text>(2R,3R)-2,3-dihydroxy-3-methylpentanoate + NADP(+) = (S)-2-ethyl-2-hydroxy-3-oxobutanoate + NADPH + H(+)</text>
        <dbReference type="Rhea" id="RHEA:13493"/>
        <dbReference type="ChEBI" id="CHEBI:15378"/>
        <dbReference type="ChEBI" id="CHEBI:49256"/>
        <dbReference type="ChEBI" id="CHEBI:49258"/>
        <dbReference type="ChEBI" id="CHEBI:57783"/>
        <dbReference type="ChEBI" id="CHEBI:58349"/>
        <dbReference type="EC" id="1.1.1.86"/>
    </reaction>
</comment>
<comment type="cofactor">
    <cofactor evidence="1">
        <name>Mg(2+)</name>
        <dbReference type="ChEBI" id="CHEBI:18420"/>
    </cofactor>
    <text evidence="1">Binds 2 magnesium ions per subunit.</text>
</comment>
<comment type="pathway">
    <text evidence="1">Amino-acid biosynthesis; L-isoleucine biosynthesis; L-isoleucine from 2-oxobutanoate: step 2/4.</text>
</comment>
<comment type="pathway">
    <text evidence="1">Amino-acid biosynthesis; L-valine biosynthesis; L-valine from pyruvate: step 2/4.</text>
</comment>
<comment type="similarity">
    <text evidence="1">Belongs to the ketol-acid reductoisomerase family.</text>
</comment>
<gene>
    <name evidence="1" type="primary">ilvC</name>
    <name type="ordered locus">Pisl_0552</name>
</gene>
<keyword id="KW-0028">Amino-acid biosynthesis</keyword>
<keyword id="KW-0100">Branched-chain amino acid biosynthesis</keyword>
<keyword id="KW-0460">Magnesium</keyword>
<keyword id="KW-0479">Metal-binding</keyword>
<keyword id="KW-0521">NADP</keyword>
<keyword id="KW-0560">Oxidoreductase</keyword>
<feature type="chain" id="PRO_1000050566" description="Ketol-acid reductoisomerase (NADP(+))">
    <location>
        <begin position="1"/>
        <end position="331"/>
    </location>
</feature>
<feature type="domain" description="KARI N-terminal Rossmann" evidence="2">
    <location>
        <begin position="2"/>
        <end position="182"/>
    </location>
</feature>
<feature type="domain" description="KARI C-terminal knotted" evidence="3">
    <location>
        <begin position="183"/>
        <end position="328"/>
    </location>
</feature>
<feature type="active site" evidence="1">
    <location>
        <position position="108"/>
    </location>
</feature>
<feature type="binding site" evidence="1">
    <location>
        <begin position="25"/>
        <end position="28"/>
    </location>
    <ligand>
        <name>NADP(+)</name>
        <dbReference type="ChEBI" id="CHEBI:58349"/>
    </ligand>
</feature>
<feature type="binding site" evidence="1">
    <location>
        <position position="48"/>
    </location>
    <ligand>
        <name>NADP(+)</name>
        <dbReference type="ChEBI" id="CHEBI:58349"/>
    </ligand>
</feature>
<feature type="binding site" evidence="1">
    <location>
        <position position="53"/>
    </location>
    <ligand>
        <name>NADP(+)</name>
        <dbReference type="ChEBI" id="CHEBI:58349"/>
    </ligand>
</feature>
<feature type="binding site" evidence="1">
    <location>
        <begin position="83"/>
        <end position="86"/>
    </location>
    <ligand>
        <name>NADP(+)</name>
        <dbReference type="ChEBI" id="CHEBI:58349"/>
    </ligand>
</feature>
<feature type="binding site" evidence="1">
    <location>
        <position position="134"/>
    </location>
    <ligand>
        <name>NADP(+)</name>
        <dbReference type="ChEBI" id="CHEBI:58349"/>
    </ligand>
</feature>
<feature type="binding site" evidence="1">
    <location>
        <position position="191"/>
    </location>
    <ligand>
        <name>Mg(2+)</name>
        <dbReference type="ChEBI" id="CHEBI:18420"/>
        <label>1</label>
    </ligand>
</feature>
<feature type="binding site" evidence="1">
    <location>
        <position position="191"/>
    </location>
    <ligand>
        <name>Mg(2+)</name>
        <dbReference type="ChEBI" id="CHEBI:18420"/>
        <label>2</label>
    </ligand>
</feature>
<feature type="binding site" evidence="1">
    <location>
        <position position="195"/>
    </location>
    <ligand>
        <name>Mg(2+)</name>
        <dbReference type="ChEBI" id="CHEBI:18420"/>
        <label>1</label>
    </ligand>
</feature>
<feature type="binding site" evidence="1">
    <location>
        <position position="227"/>
    </location>
    <ligand>
        <name>Mg(2+)</name>
        <dbReference type="ChEBI" id="CHEBI:18420"/>
        <label>2</label>
    </ligand>
</feature>
<feature type="binding site" evidence="1">
    <location>
        <position position="231"/>
    </location>
    <ligand>
        <name>Mg(2+)</name>
        <dbReference type="ChEBI" id="CHEBI:18420"/>
        <label>2</label>
    </ligand>
</feature>
<feature type="binding site" evidence="1">
    <location>
        <position position="252"/>
    </location>
    <ligand>
        <name>substrate</name>
    </ligand>
</feature>
<name>ILVC_PYRIL</name>
<accession>A1RRZ8</accession>
<reference key="1">
    <citation type="submission" date="2006-12" db="EMBL/GenBank/DDBJ databases">
        <title>Complete sequence of Pyrobaculum islandicum DSM 4184.</title>
        <authorList>
            <person name="Copeland A."/>
            <person name="Lucas S."/>
            <person name="Lapidus A."/>
            <person name="Barry K."/>
            <person name="Detter J.C."/>
            <person name="Glavina del Rio T."/>
            <person name="Dalin E."/>
            <person name="Tice H."/>
            <person name="Pitluck S."/>
            <person name="Meincke L."/>
            <person name="Brettin T."/>
            <person name="Bruce D."/>
            <person name="Han C."/>
            <person name="Tapia R."/>
            <person name="Gilna P."/>
            <person name="Schmutz J."/>
            <person name="Larimer F."/>
            <person name="Land M."/>
            <person name="Hauser L."/>
            <person name="Kyrpides N."/>
            <person name="Mikhailova N."/>
            <person name="Cozen A.E."/>
            <person name="Fitz-Gibbon S.T."/>
            <person name="House C.H."/>
            <person name="Saltikov C."/>
            <person name="Lowe T."/>
            <person name="Richardson P."/>
        </authorList>
    </citation>
    <scope>NUCLEOTIDE SEQUENCE [LARGE SCALE GENOMIC DNA]</scope>
    <source>
        <strain>DSM 4184 / JCM 9189 / GEO3</strain>
    </source>
</reference>
<protein>
    <recommendedName>
        <fullName evidence="1">Ketol-acid reductoisomerase (NADP(+))</fullName>
        <shortName evidence="1">KARI</shortName>
        <ecNumber evidence="1">1.1.1.86</ecNumber>
    </recommendedName>
    <alternativeName>
        <fullName evidence="1">Acetohydroxy-acid isomeroreductase</fullName>
        <shortName evidence="1">AHIR</shortName>
    </alternativeName>
    <alternativeName>
        <fullName evidence="1">Alpha-keto-beta-hydroxylacyl reductoisomerase</fullName>
    </alternativeName>
    <alternativeName>
        <fullName evidence="1">Ketol-acid reductoisomerase type 1</fullName>
    </alternativeName>
    <alternativeName>
        <fullName evidence="1">Ketol-acid reductoisomerase type I</fullName>
    </alternativeName>
</protein>
<evidence type="ECO:0000255" key="1">
    <source>
        <dbReference type="HAMAP-Rule" id="MF_00435"/>
    </source>
</evidence>
<evidence type="ECO:0000255" key="2">
    <source>
        <dbReference type="PROSITE-ProRule" id="PRU01197"/>
    </source>
</evidence>
<evidence type="ECO:0000255" key="3">
    <source>
        <dbReference type="PROSITE-ProRule" id="PRU01198"/>
    </source>
</evidence>
<dbReference type="EC" id="1.1.1.86" evidence="1"/>
<dbReference type="EMBL" id="CP000504">
    <property type="protein sequence ID" value="ABL87730.1"/>
    <property type="molecule type" value="Genomic_DNA"/>
</dbReference>
<dbReference type="RefSeq" id="WP_011762306.1">
    <property type="nucleotide sequence ID" value="NC_008701.1"/>
</dbReference>
<dbReference type="SMR" id="A1RRZ8"/>
<dbReference type="STRING" id="384616.Pisl_0552"/>
<dbReference type="GeneID" id="4617147"/>
<dbReference type="KEGG" id="pis:Pisl_0552"/>
<dbReference type="eggNOG" id="arCOG04465">
    <property type="taxonomic scope" value="Archaea"/>
</dbReference>
<dbReference type="HOGENOM" id="CLU_033821_0_1_2"/>
<dbReference type="OrthoDB" id="6064at2157"/>
<dbReference type="UniPathway" id="UPA00047">
    <property type="reaction ID" value="UER00056"/>
</dbReference>
<dbReference type="UniPathway" id="UPA00049">
    <property type="reaction ID" value="UER00060"/>
</dbReference>
<dbReference type="Proteomes" id="UP000002595">
    <property type="component" value="Chromosome"/>
</dbReference>
<dbReference type="GO" id="GO:0004455">
    <property type="term" value="F:ketol-acid reductoisomerase activity"/>
    <property type="evidence" value="ECO:0007669"/>
    <property type="project" value="UniProtKB-UniRule"/>
</dbReference>
<dbReference type="GO" id="GO:0000287">
    <property type="term" value="F:magnesium ion binding"/>
    <property type="evidence" value="ECO:0007669"/>
    <property type="project" value="UniProtKB-UniRule"/>
</dbReference>
<dbReference type="GO" id="GO:0050661">
    <property type="term" value="F:NADP binding"/>
    <property type="evidence" value="ECO:0007669"/>
    <property type="project" value="InterPro"/>
</dbReference>
<dbReference type="GO" id="GO:0009097">
    <property type="term" value="P:isoleucine biosynthetic process"/>
    <property type="evidence" value="ECO:0007669"/>
    <property type="project" value="UniProtKB-UniRule"/>
</dbReference>
<dbReference type="GO" id="GO:0009099">
    <property type="term" value="P:L-valine biosynthetic process"/>
    <property type="evidence" value="ECO:0007669"/>
    <property type="project" value="UniProtKB-UniRule"/>
</dbReference>
<dbReference type="FunFam" id="3.40.50.720:FF:000023">
    <property type="entry name" value="Ketol-acid reductoisomerase (NADP(+))"/>
    <property type="match status" value="1"/>
</dbReference>
<dbReference type="Gene3D" id="6.10.240.10">
    <property type="match status" value="1"/>
</dbReference>
<dbReference type="Gene3D" id="3.40.50.720">
    <property type="entry name" value="NAD(P)-binding Rossmann-like Domain"/>
    <property type="match status" value="1"/>
</dbReference>
<dbReference type="HAMAP" id="MF_00435">
    <property type="entry name" value="IlvC"/>
    <property type="match status" value="1"/>
</dbReference>
<dbReference type="InterPro" id="IPR008927">
    <property type="entry name" value="6-PGluconate_DH-like_C_sf"/>
</dbReference>
<dbReference type="InterPro" id="IPR013023">
    <property type="entry name" value="KARI"/>
</dbReference>
<dbReference type="InterPro" id="IPR000506">
    <property type="entry name" value="KARI_C"/>
</dbReference>
<dbReference type="InterPro" id="IPR013116">
    <property type="entry name" value="KARI_N"/>
</dbReference>
<dbReference type="InterPro" id="IPR014359">
    <property type="entry name" value="KARI_prok"/>
</dbReference>
<dbReference type="InterPro" id="IPR036291">
    <property type="entry name" value="NAD(P)-bd_dom_sf"/>
</dbReference>
<dbReference type="NCBIfam" id="TIGR00465">
    <property type="entry name" value="ilvC"/>
    <property type="match status" value="1"/>
</dbReference>
<dbReference type="NCBIfam" id="NF004017">
    <property type="entry name" value="PRK05479.1"/>
    <property type="match status" value="1"/>
</dbReference>
<dbReference type="PANTHER" id="PTHR21371">
    <property type="entry name" value="KETOL-ACID REDUCTOISOMERASE, MITOCHONDRIAL"/>
    <property type="match status" value="1"/>
</dbReference>
<dbReference type="PANTHER" id="PTHR21371:SF1">
    <property type="entry name" value="KETOL-ACID REDUCTOISOMERASE, MITOCHONDRIAL"/>
    <property type="match status" value="1"/>
</dbReference>
<dbReference type="Pfam" id="PF01450">
    <property type="entry name" value="KARI_C"/>
    <property type="match status" value="1"/>
</dbReference>
<dbReference type="Pfam" id="PF07991">
    <property type="entry name" value="KARI_N"/>
    <property type="match status" value="1"/>
</dbReference>
<dbReference type="PIRSF" id="PIRSF000116">
    <property type="entry name" value="IlvC_gammaproteo"/>
    <property type="match status" value="1"/>
</dbReference>
<dbReference type="SUPFAM" id="SSF48179">
    <property type="entry name" value="6-phosphogluconate dehydrogenase C-terminal domain-like"/>
    <property type="match status" value="1"/>
</dbReference>
<dbReference type="SUPFAM" id="SSF51735">
    <property type="entry name" value="NAD(P)-binding Rossmann-fold domains"/>
    <property type="match status" value="1"/>
</dbReference>
<dbReference type="PROSITE" id="PS51851">
    <property type="entry name" value="KARI_C"/>
    <property type="match status" value="1"/>
</dbReference>
<dbReference type="PROSITE" id="PS51850">
    <property type="entry name" value="KARI_N"/>
    <property type="match status" value="1"/>
</dbReference>
<sequence length="331" mass="36235">MAKIYTDKDASLEPLKGKTIAVIGYGIQGRAQALNLRDSGLKVIIGLRKGGNSWNLAVSEGFEVYEVSDAVAQADVIMVLIPDMEQPKVWQNQIAPFLKEGAVVDFAHGFNIHYGLIKPPKNVDVIMVAPKAPGKAVREEFLAGRGVPALVAVHQDYSGAALKYALAIAKGIGATRAGVIETTFAEETETDLIGEQIVLVGGLMELIKKGFEVLVEMGYQPEVAYFEVLNEAKLIMDLIWQRGIYGMLNGVSDTAKYGGLTVGPKIIDEEVKKKMRIFALRVKSGEFAKEWVEEYARGGLTLKKLMESARTHPIEIVGAEMRKLLFGRQQE</sequence>
<proteinExistence type="inferred from homology"/>
<organism>
    <name type="scientific">Pyrobaculum islandicum (strain DSM 4184 / JCM 9189 / GEO3)</name>
    <dbReference type="NCBI Taxonomy" id="384616"/>
    <lineage>
        <taxon>Archaea</taxon>
        <taxon>Thermoproteota</taxon>
        <taxon>Thermoprotei</taxon>
        <taxon>Thermoproteales</taxon>
        <taxon>Thermoproteaceae</taxon>
        <taxon>Pyrobaculum</taxon>
    </lineage>
</organism>